<accession>B7LP19</accession>
<proteinExistence type="inferred from homology"/>
<evidence type="ECO:0000255" key="1">
    <source>
        <dbReference type="HAMAP-Rule" id="MF_01154"/>
    </source>
</evidence>
<protein>
    <recommendedName>
        <fullName evidence="1">Curved DNA-binding protein</fullName>
    </recommendedName>
</protein>
<dbReference type="EMBL" id="CU928158">
    <property type="protein sequence ID" value="CAQ88675.1"/>
    <property type="molecule type" value="Genomic_DNA"/>
</dbReference>
<dbReference type="RefSeq" id="WP_000420612.1">
    <property type="nucleotide sequence ID" value="NC_011740.1"/>
</dbReference>
<dbReference type="SMR" id="B7LP19"/>
<dbReference type="GeneID" id="75057804"/>
<dbReference type="KEGG" id="efe:EFER_1147"/>
<dbReference type="HOGENOM" id="CLU_017633_0_0_6"/>
<dbReference type="OrthoDB" id="9779889at2"/>
<dbReference type="Proteomes" id="UP000000745">
    <property type="component" value="Chromosome"/>
</dbReference>
<dbReference type="GO" id="GO:0005737">
    <property type="term" value="C:cytoplasm"/>
    <property type="evidence" value="ECO:0007669"/>
    <property type="project" value="UniProtKB-UniRule"/>
</dbReference>
<dbReference type="GO" id="GO:0009295">
    <property type="term" value="C:nucleoid"/>
    <property type="evidence" value="ECO:0007669"/>
    <property type="project" value="UniProtKB-SubCell"/>
</dbReference>
<dbReference type="GO" id="GO:0003681">
    <property type="term" value="F:bent DNA binding"/>
    <property type="evidence" value="ECO:0007669"/>
    <property type="project" value="UniProtKB-UniRule"/>
</dbReference>
<dbReference type="GO" id="GO:0051082">
    <property type="term" value="F:unfolded protein binding"/>
    <property type="evidence" value="ECO:0007669"/>
    <property type="project" value="InterPro"/>
</dbReference>
<dbReference type="GO" id="GO:0051085">
    <property type="term" value="P:chaperone cofactor-dependent protein refolding"/>
    <property type="evidence" value="ECO:0007669"/>
    <property type="project" value="TreeGrafter"/>
</dbReference>
<dbReference type="GO" id="GO:0042026">
    <property type="term" value="P:protein refolding"/>
    <property type="evidence" value="ECO:0007669"/>
    <property type="project" value="TreeGrafter"/>
</dbReference>
<dbReference type="CDD" id="cd06257">
    <property type="entry name" value="DnaJ"/>
    <property type="match status" value="1"/>
</dbReference>
<dbReference type="CDD" id="cd10747">
    <property type="entry name" value="DnaJ_C"/>
    <property type="match status" value="1"/>
</dbReference>
<dbReference type="FunFam" id="1.10.287.110:FF:000013">
    <property type="entry name" value="Curved DNA-binding protein"/>
    <property type="match status" value="1"/>
</dbReference>
<dbReference type="FunFam" id="2.60.260.20:FF:000008">
    <property type="entry name" value="Curved DNA-binding protein"/>
    <property type="match status" value="1"/>
</dbReference>
<dbReference type="FunFam" id="2.60.260.20:FF:000013">
    <property type="entry name" value="DnaJ subfamily B member 11"/>
    <property type="match status" value="1"/>
</dbReference>
<dbReference type="Gene3D" id="1.10.287.110">
    <property type="entry name" value="DnaJ domain"/>
    <property type="match status" value="1"/>
</dbReference>
<dbReference type="Gene3D" id="1.20.5.460">
    <property type="entry name" value="Single helix bin"/>
    <property type="match status" value="1"/>
</dbReference>
<dbReference type="Gene3D" id="2.60.260.20">
    <property type="entry name" value="Urease metallochaperone UreE, N-terminal domain"/>
    <property type="match status" value="2"/>
</dbReference>
<dbReference type="HAMAP" id="MF_01154">
    <property type="entry name" value="CbpA"/>
    <property type="match status" value="1"/>
</dbReference>
<dbReference type="InterPro" id="IPR023859">
    <property type="entry name" value="DNA-bd_curved-DNA"/>
</dbReference>
<dbReference type="InterPro" id="IPR002939">
    <property type="entry name" value="DnaJ_C"/>
</dbReference>
<dbReference type="InterPro" id="IPR001623">
    <property type="entry name" value="DnaJ_domain"/>
</dbReference>
<dbReference type="InterPro" id="IPR018253">
    <property type="entry name" value="DnaJ_domain_CS"/>
</dbReference>
<dbReference type="InterPro" id="IPR008971">
    <property type="entry name" value="HSP40/DnaJ_pept-bd"/>
</dbReference>
<dbReference type="InterPro" id="IPR036869">
    <property type="entry name" value="J_dom_sf"/>
</dbReference>
<dbReference type="NCBIfam" id="NF007618">
    <property type="entry name" value="PRK10266.1"/>
    <property type="match status" value="1"/>
</dbReference>
<dbReference type="PANTHER" id="PTHR43096">
    <property type="entry name" value="DNAJ HOMOLOG 1, MITOCHONDRIAL-RELATED"/>
    <property type="match status" value="1"/>
</dbReference>
<dbReference type="PANTHER" id="PTHR43096:SF52">
    <property type="entry name" value="DNAJ HOMOLOG 1, MITOCHONDRIAL-RELATED"/>
    <property type="match status" value="1"/>
</dbReference>
<dbReference type="Pfam" id="PF00226">
    <property type="entry name" value="DnaJ"/>
    <property type="match status" value="1"/>
</dbReference>
<dbReference type="Pfam" id="PF01556">
    <property type="entry name" value="DnaJ_C"/>
    <property type="match status" value="1"/>
</dbReference>
<dbReference type="PRINTS" id="PR00625">
    <property type="entry name" value="JDOMAIN"/>
</dbReference>
<dbReference type="SMART" id="SM00271">
    <property type="entry name" value="DnaJ"/>
    <property type="match status" value="1"/>
</dbReference>
<dbReference type="SUPFAM" id="SSF46565">
    <property type="entry name" value="Chaperone J-domain"/>
    <property type="match status" value="1"/>
</dbReference>
<dbReference type="SUPFAM" id="SSF49493">
    <property type="entry name" value="HSP40/DnaJ peptide-binding domain"/>
    <property type="match status" value="2"/>
</dbReference>
<dbReference type="PROSITE" id="PS00636">
    <property type="entry name" value="DNAJ_1"/>
    <property type="match status" value="1"/>
</dbReference>
<dbReference type="PROSITE" id="PS50076">
    <property type="entry name" value="DNAJ_2"/>
    <property type="match status" value="1"/>
</dbReference>
<gene>
    <name evidence="1" type="primary">cbpA</name>
    <name type="ordered locus">EFER_1147</name>
</gene>
<comment type="function">
    <text evidence="1">DNA-binding protein that preferentially recognizes a curved DNA sequence. It is probably a functional analog of DnaJ; displays overlapping activities with DnaJ, but functions under different conditions, probably acting as a molecular chaperone in an adaptive response to environmental stresses other than heat shock. Lacks autonomous chaperone activity; binds native substrates and targets them for recognition by DnaK. Its activity is inhibited by the binding of CbpM.</text>
</comment>
<comment type="subcellular location">
    <subcellularLocation>
        <location evidence="1">Cytoplasm</location>
        <location evidence="1">Nucleoid</location>
    </subcellularLocation>
</comment>
<reference key="1">
    <citation type="journal article" date="2009" name="PLoS Genet.">
        <title>Organised genome dynamics in the Escherichia coli species results in highly diverse adaptive paths.</title>
        <authorList>
            <person name="Touchon M."/>
            <person name="Hoede C."/>
            <person name="Tenaillon O."/>
            <person name="Barbe V."/>
            <person name="Baeriswyl S."/>
            <person name="Bidet P."/>
            <person name="Bingen E."/>
            <person name="Bonacorsi S."/>
            <person name="Bouchier C."/>
            <person name="Bouvet O."/>
            <person name="Calteau A."/>
            <person name="Chiapello H."/>
            <person name="Clermont O."/>
            <person name="Cruveiller S."/>
            <person name="Danchin A."/>
            <person name="Diard M."/>
            <person name="Dossat C."/>
            <person name="Karoui M.E."/>
            <person name="Frapy E."/>
            <person name="Garry L."/>
            <person name="Ghigo J.M."/>
            <person name="Gilles A.M."/>
            <person name="Johnson J."/>
            <person name="Le Bouguenec C."/>
            <person name="Lescat M."/>
            <person name="Mangenot S."/>
            <person name="Martinez-Jehanne V."/>
            <person name="Matic I."/>
            <person name="Nassif X."/>
            <person name="Oztas S."/>
            <person name="Petit M.A."/>
            <person name="Pichon C."/>
            <person name="Rouy Z."/>
            <person name="Ruf C.S."/>
            <person name="Schneider D."/>
            <person name="Tourret J."/>
            <person name="Vacherie B."/>
            <person name="Vallenet D."/>
            <person name="Medigue C."/>
            <person name="Rocha E.P.C."/>
            <person name="Denamur E."/>
        </authorList>
    </citation>
    <scope>NUCLEOTIDE SEQUENCE [LARGE SCALE GENOMIC DNA]</scope>
    <source>
        <strain>ATCC 35469 / DSM 13698 / BCRC 15582 / CCUG 18766 / IAM 14443 / JCM 21226 / LMG 7866 / NBRC 102419 / NCTC 12128 / CDC 0568-73</strain>
    </source>
</reference>
<sequence length="306" mass="34390">MELKDYYAIMGVKPTDDLKTIKTAYRRLARKYHPDVSKEPDAEARFKEVAEAWEVLSDEQRRAEYDQMWQHRNDPQFNRQFHHGDGQSFNAEDFDDIFSSIFGQHARQARQRPATRGHDIEIEVPVFLEETLSEHKRTISYNLPVYNAFGMVEQEIPKTLNVKIPAGVGNGQRIRLKGQGTPGENGGPNGDLWLIIHIAPHPLFDVVGQDLEIVVPVAPWEAALGGKVTVPTLKESILLTIPAGSQAGQRLRVKGKGLVSKKHTGDLYAVLKIVMPPKPDENATALWQQLADAQSSFDPRKDWGKA</sequence>
<feature type="chain" id="PRO_1000137753" description="Curved DNA-binding protein">
    <location>
        <begin position="1"/>
        <end position="306"/>
    </location>
</feature>
<feature type="domain" description="J" evidence="1">
    <location>
        <begin position="5"/>
        <end position="69"/>
    </location>
</feature>
<organism>
    <name type="scientific">Escherichia fergusonii (strain ATCC 35469 / DSM 13698 / CCUG 18766 / IAM 14443 / JCM 21226 / LMG 7866 / NBRC 102419 / NCTC 12128 / CDC 0568-73)</name>
    <dbReference type="NCBI Taxonomy" id="585054"/>
    <lineage>
        <taxon>Bacteria</taxon>
        <taxon>Pseudomonadati</taxon>
        <taxon>Pseudomonadota</taxon>
        <taxon>Gammaproteobacteria</taxon>
        <taxon>Enterobacterales</taxon>
        <taxon>Enterobacteriaceae</taxon>
        <taxon>Escherichia</taxon>
    </lineage>
</organism>
<keyword id="KW-0143">Chaperone</keyword>
<keyword id="KW-0963">Cytoplasm</keyword>
<keyword id="KW-0238">DNA-binding</keyword>
<name>CBPA_ESCF3</name>